<evidence type="ECO:0000250" key="1">
    <source>
        <dbReference type="UniProtKB" id="Q6XUX1"/>
    </source>
</evidence>
<evidence type="ECO:0000250" key="2">
    <source>
        <dbReference type="UniProtKB" id="Q6XUX3"/>
    </source>
</evidence>
<evidence type="ECO:0000255" key="3"/>
<evidence type="ECO:0000255" key="4">
    <source>
        <dbReference type="PROSITE-ProRule" id="PRU00159"/>
    </source>
</evidence>
<evidence type="ECO:0000255" key="5">
    <source>
        <dbReference type="PROSITE-ProRule" id="PRU10027"/>
    </source>
</evidence>
<evidence type="ECO:0000256" key="6">
    <source>
        <dbReference type="SAM" id="MobiDB-lite"/>
    </source>
</evidence>
<dbReference type="EC" id="2.7.12.1"/>
<dbReference type="EMBL" id="DQ054504">
    <property type="protein sequence ID" value="AAY46409.1"/>
    <property type="molecule type" value="mRNA"/>
</dbReference>
<dbReference type="RefSeq" id="NP_001019995.1">
    <property type="nucleotide sequence ID" value="NM_001024824.1"/>
</dbReference>
<dbReference type="SMR" id="Q4TVR5"/>
<dbReference type="FunCoup" id="Q4TVR5">
    <property type="interactions" value="2146"/>
</dbReference>
<dbReference type="STRING" id="9913.ENSBTAP00000022108"/>
<dbReference type="PaxDb" id="9913-ENSBTAP00000022108"/>
<dbReference type="Ensembl" id="ENSBTAT00000022108.5">
    <property type="protein sequence ID" value="ENSBTAP00000022108.4"/>
    <property type="gene ID" value="ENSBTAG00000016618.6"/>
</dbReference>
<dbReference type="GeneID" id="534684"/>
<dbReference type="KEGG" id="bta:534684"/>
<dbReference type="CTD" id="25778"/>
<dbReference type="VEuPathDB" id="HostDB:ENSBTAG00000016618"/>
<dbReference type="VGNC" id="VGNC:28227">
    <property type="gene designation" value="DSTYK"/>
</dbReference>
<dbReference type="eggNOG" id="KOG0192">
    <property type="taxonomic scope" value="Eukaryota"/>
</dbReference>
<dbReference type="GeneTree" id="ENSGT00840000129948"/>
<dbReference type="HOGENOM" id="CLU_014116_0_0_1"/>
<dbReference type="InParanoid" id="Q4TVR5"/>
<dbReference type="OMA" id="VTRMVWE"/>
<dbReference type="OrthoDB" id="122279at2759"/>
<dbReference type="TreeFam" id="TF331821"/>
<dbReference type="Proteomes" id="UP000009136">
    <property type="component" value="Chromosome 16"/>
</dbReference>
<dbReference type="Bgee" id="ENSBTAG00000016618">
    <property type="expression patterns" value="Expressed in spermatid and 105 other cell types or tissues"/>
</dbReference>
<dbReference type="GO" id="GO:0070161">
    <property type="term" value="C:anchoring junction"/>
    <property type="evidence" value="ECO:0007669"/>
    <property type="project" value="UniProtKB-SubCell"/>
</dbReference>
<dbReference type="GO" id="GO:0016324">
    <property type="term" value="C:apical plasma membrane"/>
    <property type="evidence" value="ECO:0000250"/>
    <property type="project" value="UniProtKB"/>
</dbReference>
<dbReference type="GO" id="GO:0016323">
    <property type="term" value="C:basolateral plasma membrane"/>
    <property type="evidence" value="ECO:0000250"/>
    <property type="project" value="UniProtKB"/>
</dbReference>
<dbReference type="GO" id="GO:0005737">
    <property type="term" value="C:cytoplasm"/>
    <property type="evidence" value="ECO:0000250"/>
    <property type="project" value="UniProtKB"/>
</dbReference>
<dbReference type="GO" id="GO:0005524">
    <property type="term" value="F:ATP binding"/>
    <property type="evidence" value="ECO:0007669"/>
    <property type="project" value="UniProtKB-KW"/>
</dbReference>
<dbReference type="GO" id="GO:0106310">
    <property type="term" value="F:protein serine kinase activity"/>
    <property type="evidence" value="ECO:0007669"/>
    <property type="project" value="RHEA"/>
</dbReference>
<dbReference type="GO" id="GO:0004674">
    <property type="term" value="F:protein serine/threonine kinase activity"/>
    <property type="evidence" value="ECO:0007669"/>
    <property type="project" value="UniProtKB-KW"/>
</dbReference>
<dbReference type="GO" id="GO:0004712">
    <property type="term" value="F:protein serine/threonine/tyrosine kinase activity"/>
    <property type="evidence" value="ECO:0007669"/>
    <property type="project" value="UniProtKB-EC"/>
</dbReference>
<dbReference type="GO" id="GO:0004713">
    <property type="term" value="F:protein tyrosine kinase activity"/>
    <property type="evidence" value="ECO:0007669"/>
    <property type="project" value="UniProtKB-KW"/>
</dbReference>
<dbReference type="GO" id="GO:0044344">
    <property type="term" value="P:cellular response to fibroblast growth factor stimulus"/>
    <property type="evidence" value="ECO:0000250"/>
    <property type="project" value="UniProtKB"/>
</dbReference>
<dbReference type="GO" id="GO:0043066">
    <property type="term" value="P:negative regulation of apoptotic process"/>
    <property type="evidence" value="ECO:0000250"/>
    <property type="project" value="UniProtKB"/>
</dbReference>
<dbReference type="GO" id="GO:0070374">
    <property type="term" value="P:positive regulation of ERK1 and ERK2 cascade"/>
    <property type="evidence" value="ECO:0000250"/>
    <property type="project" value="UniProtKB"/>
</dbReference>
<dbReference type="GO" id="GO:0045743">
    <property type="term" value="P:positive regulation of fibroblast growth factor receptor signaling pathway"/>
    <property type="evidence" value="ECO:0000250"/>
    <property type="project" value="UniProtKB"/>
</dbReference>
<dbReference type="GO" id="GO:0033674">
    <property type="term" value="P:positive regulation of kinase activity"/>
    <property type="evidence" value="ECO:0000250"/>
    <property type="project" value="UniProtKB"/>
</dbReference>
<dbReference type="CDD" id="cd13975">
    <property type="entry name" value="PKc_Dusty"/>
    <property type="match status" value="1"/>
</dbReference>
<dbReference type="FunFam" id="1.10.510.10:FF:000244">
    <property type="entry name" value="Dual serine/threonine and tyrosine protein kinase"/>
    <property type="match status" value="1"/>
</dbReference>
<dbReference type="Gene3D" id="1.10.510.10">
    <property type="entry name" value="Transferase(Phosphotransferase) domain 1"/>
    <property type="match status" value="1"/>
</dbReference>
<dbReference type="InterPro" id="IPR051302">
    <property type="entry name" value="Dual_SerThr-Tyr_Kinase"/>
</dbReference>
<dbReference type="InterPro" id="IPR011009">
    <property type="entry name" value="Kinase-like_dom_sf"/>
</dbReference>
<dbReference type="InterPro" id="IPR000719">
    <property type="entry name" value="Prot_kinase_dom"/>
</dbReference>
<dbReference type="InterPro" id="IPR017441">
    <property type="entry name" value="Protein_kinase_ATP_BS"/>
</dbReference>
<dbReference type="InterPro" id="IPR008271">
    <property type="entry name" value="Ser/Thr_kinase_AS"/>
</dbReference>
<dbReference type="PANTHER" id="PTHR46392">
    <property type="entry name" value="DUAL SERINE/THREONINE AND TYROSINE PROTEIN KINASE"/>
    <property type="match status" value="1"/>
</dbReference>
<dbReference type="PANTHER" id="PTHR46392:SF1">
    <property type="entry name" value="DUAL SERINE_THREONINE AND TYROSINE PROTEIN KINASE"/>
    <property type="match status" value="1"/>
</dbReference>
<dbReference type="Pfam" id="PF00069">
    <property type="entry name" value="Pkinase"/>
    <property type="match status" value="1"/>
</dbReference>
<dbReference type="SMART" id="SM00220">
    <property type="entry name" value="S_TKc"/>
    <property type="match status" value="1"/>
</dbReference>
<dbReference type="SUPFAM" id="SSF56112">
    <property type="entry name" value="Protein kinase-like (PK-like)"/>
    <property type="match status" value="1"/>
</dbReference>
<dbReference type="PROSITE" id="PS00107">
    <property type="entry name" value="PROTEIN_KINASE_ATP"/>
    <property type="match status" value="1"/>
</dbReference>
<dbReference type="PROSITE" id="PS50011">
    <property type="entry name" value="PROTEIN_KINASE_DOM"/>
    <property type="match status" value="1"/>
</dbReference>
<dbReference type="PROSITE" id="PS00108">
    <property type="entry name" value="PROTEIN_KINASE_ST"/>
    <property type="match status" value="1"/>
</dbReference>
<protein>
    <recommendedName>
        <fullName>Dual serine/threonine and tyrosine protein kinase</fullName>
        <ecNumber>2.7.12.1</ecNumber>
    </recommendedName>
    <alternativeName>
        <fullName>Dusty protein kinase</fullName>
        <shortName>Dusty PK</shortName>
    </alternativeName>
    <alternativeName>
        <fullName>Receptor-interacting serine/threonine-protein kinase 5</fullName>
    </alternativeName>
</protein>
<organism>
    <name type="scientific">Bos taurus</name>
    <name type="common">Bovine</name>
    <dbReference type="NCBI Taxonomy" id="9913"/>
    <lineage>
        <taxon>Eukaryota</taxon>
        <taxon>Metazoa</taxon>
        <taxon>Chordata</taxon>
        <taxon>Craniata</taxon>
        <taxon>Vertebrata</taxon>
        <taxon>Euteleostomi</taxon>
        <taxon>Mammalia</taxon>
        <taxon>Eutheria</taxon>
        <taxon>Laurasiatheria</taxon>
        <taxon>Artiodactyla</taxon>
        <taxon>Ruminantia</taxon>
        <taxon>Pecora</taxon>
        <taxon>Bovidae</taxon>
        <taxon>Bovinae</taxon>
        <taxon>Bos</taxon>
    </lineage>
</organism>
<name>DUSTY_BOVIN</name>
<keyword id="KW-0067">ATP-binding</keyword>
<keyword id="KW-0965">Cell junction</keyword>
<keyword id="KW-1003">Cell membrane</keyword>
<keyword id="KW-0175">Coiled coil</keyword>
<keyword id="KW-0963">Cytoplasm</keyword>
<keyword id="KW-0418">Kinase</keyword>
<keyword id="KW-0472">Membrane</keyword>
<keyword id="KW-0547">Nucleotide-binding</keyword>
<keyword id="KW-1185">Reference proteome</keyword>
<keyword id="KW-0723">Serine/threonine-protein kinase</keyword>
<keyword id="KW-0808">Transferase</keyword>
<keyword id="KW-0829">Tyrosine-protein kinase</keyword>
<feature type="chain" id="PRO_0000233116" description="Dual serine/threonine and tyrosine protein kinase">
    <location>
        <begin position="1"/>
        <end position="928"/>
    </location>
</feature>
<feature type="domain" description="Protein kinase" evidence="4">
    <location>
        <begin position="651"/>
        <end position="905"/>
    </location>
</feature>
<feature type="region of interest" description="Disordered" evidence="6">
    <location>
        <begin position="1"/>
        <end position="22"/>
    </location>
</feature>
<feature type="region of interest" description="Disordered" evidence="6">
    <location>
        <begin position="55"/>
        <end position="81"/>
    </location>
</feature>
<feature type="coiled-coil region" evidence="3">
    <location>
        <begin position="394"/>
        <end position="430"/>
    </location>
</feature>
<feature type="compositionally biased region" description="Low complexity" evidence="6">
    <location>
        <begin position="1"/>
        <end position="14"/>
    </location>
</feature>
<feature type="active site" description="Proton acceptor" evidence="4 5">
    <location>
        <position position="776"/>
    </location>
</feature>
<feature type="binding site" evidence="4">
    <location>
        <begin position="657"/>
        <end position="665"/>
    </location>
    <ligand>
        <name>ATP</name>
        <dbReference type="ChEBI" id="CHEBI:30616"/>
    </ligand>
</feature>
<feature type="binding site" evidence="4">
    <location>
        <position position="680"/>
    </location>
    <ligand>
        <name>ATP</name>
        <dbReference type="ChEBI" id="CHEBI:30616"/>
    </ligand>
</feature>
<accession>Q4TVR5</accession>
<comment type="function">
    <text evidence="2">Acts as a positive regulator of ERK phosphorylation downstream of fibroblast growth factor-receptor activation. Involved in the regulation of both caspase-dependent apoptosis and caspase-independent cell death. In the skin, it plays a predominant role in suppressing caspase-dependent apoptosis in response to UV stress in a range of dermal cell types.</text>
</comment>
<comment type="catalytic activity">
    <reaction>
        <text>L-seryl-[protein] + ATP = O-phospho-L-seryl-[protein] + ADP + H(+)</text>
        <dbReference type="Rhea" id="RHEA:17989"/>
        <dbReference type="Rhea" id="RHEA-COMP:9863"/>
        <dbReference type="Rhea" id="RHEA-COMP:11604"/>
        <dbReference type="ChEBI" id="CHEBI:15378"/>
        <dbReference type="ChEBI" id="CHEBI:29999"/>
        <dbReference type="ChEBI" id="CHEBI:30616"/>
        <dbReference type="ChEBI" id="CHEBI:83421"/>
        <dbReference type="ChEBI" id="CHEBI:456216"/>
        <dbReference type="EC" id="2.7.12.1"/>
    </reaction>
</comment>
<comment type="catalytic activity">
    <reaction>
        <text>L-threonyl-[protein] + ATP = O-phospho-L-threonyl-[protein] + ADP + H(+)</text>
        <dbReference type="Rhea" id="RHEA:46608"/>
        <dbReference type="Rhea" id="RHEA-COMP:11060"/>
        <dbReference type="Rhea" id="RHEA-COMP:11605"/>
        <dbReference type="ChEBI" id="CHEBI:15378"/>
        <dbReference type="ChEBI" id="CHEBI:30013"/>
        <dbReference type="ChEBI" id="CHEBI:30616"/>
        <dbReference type="ChEBI" id="CHEBI:61977"/>
        <dbReference type="ChEBI" id="CHEBI:456216"/>
        <dbReference type="EC" id="2.7.12.1"/>
    </reaction>
</comment>
<comment type="catalytic activity">
    <reaction>
        <text>L-tyrosyl-[protein] + ATP = O-phospho-L-tyrosyl-[protein] + ADP + H(+)</text>
        <dbReference type="Rhea" id="RHEA:10596"/>
        <dbReference type="Rhea" id="RHEA-COMP:10136"/>
        <dbReference type="Rhea" id="RHEA-COMP:20101"/>
        <dbReference type="ChEBI" id="CHEBI:15378"/>
        <dbReference type="ChEBI" id="CHEBI:30616"/>
        <dbReference type="ChEBI" id="CHEBI:46858"/>
        <dbReference type="ChEBI" id="CHEBI:61978"/>
        <dbReference type="ChEBI" id="CHEBI:456216"/>
        <dbReference type="EC" id="2.7.12.1"/>
    </reaction>
</comment>
<comment type="subcellular location">
    <subcellularLocation>
        <location evidence="1">Cytoplasm</location>
    </subcellularLocation>
    <subcellularLocation>
        <location evidence="1">Cell membrane</location>
    </subcellularLocation>
    <subcellularLocation>
        <location evidence="1">Apical cell membrane</location>
    </subcellularLocation>
    <subcellularLocation>
        <location evidence="1">Basolateral cell membrane</location>
    </subcellularLocation>
    <subcellularLocation>
        <location evidence="1">Cell junction</location>
    </subcellularLocation>
    <text evidence="1">Detected in basolateral and apical membranes of all tubular epithelia. Detected at apical cell-cell junctions. Colocalized with FGF receptors to the cell membrane.</text>
</comment>
<comment type="similarity">
    <text evidence="4">Belongs to the protein kinase superfamily. Ser/Thr protein kinase family.</text>
</comment>
<sequence length="928" mass="104804">MEGDGVPWGSEPESGPGPGGGGVIRELCRGFGRYRRYLGRLRQNLRDTQKFFRDLRGSQPRGCPSSPAEGGEAGRGPAGDVAATGLPAGQLSCISFPPKEEKRLQQMVDCLPCILILGQDCSVKCQLLNLLLGVQVLPTNKLGGENCKLRRLRFTYGTQTRVSLALPDRYELVHTLAAHQGTWETVPEEDLEAREDSEDAARVLAELEVTMRHALLQEVDIVVAPCQGLRPTVDVLSDLVNDFLPVITYALHKDELSERDEQELQEIRKYFSFPIFFFKVPKLGSEIIDSSTERMESERSPLHRQLTDLGYLSSSLCNCGAPGQDTKAQSMLVEQSEKLRHLNTFSHQVLQTRLVDAAKALNLVHCRCLDIFINQAFDMQRDLQITPKRLEYTRKKENELYESLMNIANRKQEEMKDMIVETLNTMKEELLDDAANMEFKDVIVPENGEPVGTREIKCCIRQIQELIISRLNQAVANKLISSVDYLRESFVGTLERCLQSLEKSQDVSVHITSNYLKQILNAAYHVEVTFHSGSSVTRMLWEQIKQIIQRITWVSPPAITLEWKRKVAQEAIESLSASKLAKSICSQFRTRLNSSHEAFAASLRQLEAGHSGRLEKTEDLWLKVRKDHAPRLARLSLESRSLQDVLLHRKPKLGQELGRGQYGVVYLCDSWGGHFPCALKSVVPPDEKHWNDLALEFHYMRSLPKHERLVDLHGSVIDYSYGGGSSIAVLLIMERLHRDLYTGLKAGLALETRLQIALDVVEGIRFLHSQGLVHRDVKLKNVLLDKQNRAKITDLGFCKPEAMMSGSIVGTPIHMAPELFTGKYDNSVDVYAFGILFWYICSGSVKLPEAFERCASKDHLWNNVRRGARPERLPVFDEECWQLMEACWDGDPSQRPLLGIVQPMLQGIMDRLCKSHSERPNRGLDDST</sequence>
<gene>
    <name type="primary">DSTYK</name>
    <name type="synonym">RIPK5</name>
</gene>
<reference key="1">
    <citation type="journal article" date="2006" name="Biochim. Biophys. Acta">
        <title>Dusty protein kinases: primary structure, gene evolution, tissue specific expression and unique features of the catalytic domain.</title>
        <authorList>
            <person name="Peng J."/>
            <person name="Dong W."/>
            <person name="Chen Y."/>
            <person name="Mo R."/>
            <person name="Cheng J.-F."/>
            <person name="Hui C.-C."/>
            <person name="Mohandas N."/>
            <person name="Huang C.-H."/>
        </authorList>
    </citation>
    <scope>NUCLEOTIDE SEQUENCE [MRNA]</scope>
</reference>
<proteinExistence type="evidence at transcript level"/>